<feature type="chain" id="PRO_0000130795" description="Large ribosomal subunit protein uL24">
    <location>
        <begin position="1"/>
        <end position="142"/>
    </location>
</feature>
<feature type="region of interest" description="Disordered" evidence="1">
    <location>
        <begin position="1"/>
        <end position="24"/>
    </location>
</feature>
<feature type="compositionally biased region" description="Polar residues" evidence="1">
    <location>
        <begin position="1"/>
        <end position="11"/>
    </location>
</feature>
<feature type="splice variant" id="VSP_020728" description="In isoform b." evidence="2">
    <original>AITKLKLDKDRRALVERKAAGRSRVTGILKGKHTDETVN</original>
    <variation>RFV</variation>
    <location>
        <begin position="104"/>
        <end position="142"/>
    </location>
</feature>
<organism>
    <name type="scientific">Caenorhabditis elegans</name>
    <dbReference type="NCBI Taxonomy" id="6239"/>
    <lineage>
        <taxon>Eukaryota</taxon>
        <taxon>Metazoa</taxon>
        <taxon>Ecdysozoa</taxon>
        <taxon>Nematoda</taxon>
        <taxon>Chromadorea</taxon>
        <taxon>Rhabditida</taxon>
        <taxon>Rhabditina</taxon>
        <taxon>Rhabditomorpha</taxon>
        <taxon>Rhabditoidea</taxon>
        <taxon>Rhabditidae</taxon>
        <taxon>Peloderinae</taxon>
        <taxon>Caenorhabditis</taxon>
    </lineage>
</organism>
<proteinExistence type="evidence at protein level"/>
<protein>
    <recommendedName>
        <fullName evidence="2">Large ribosomal subunit protein uL24</fullName>
    </recommendedName>
    <alternativeName>
        <fullName>60S ribosomal protein L26</fullName>
    </alternativeName>
</protein>
<comment type="alternative products">
    <event type="alternative splicing"/>
    <isoform>
        <id>Q19869-1</id>
        <name>a</name>
        <sequence type="displayed"/>
    </isoform>
    <isoform>
        <id>Q19869-2</id>
        <name>b</name>
        <sequence type="described" ref="VSP_020728"/>
    </isoform>
</comment>
<comment type="similarity">
    <text evidence="2">Belongs to the universal ribosomal protein uL24 family.</text>
</comment>
<evidence type="ECO:0000256" key="1">
    <source>
        <dbReference type="SAM" id="MobiDB-lite"/>
    </source>
</evidence>
<evidence type="ECO:0000305" key="2"/>
<reference key="1">
    <citation type="journal article" date="1998" name="Science">
        <title>Genome sequence of the nematode C. elegans: a platform for investigating biology.</title>
        <authorList>
            <consortium name="The C. elegans sequencing consortium"/>
        </authorList>
    </citation>
    <scope>NUCLEOTIDE SEQUENCE [LARGE SCALE GENOMIC DNA]</scope>
    <scope>ALTERNATIVE SPLICING</scope>
    <source>
        <strain>Bristol N2</strain>
    </source>
</reference>
<sequence>MKVNPFVSSDSGKSRKAHFNAPSHERRRIMSAPLTKELRTKHGIRAIPIRTDDEVVVMRGRHKGNTGRVLRCYRKKFVIHIDKITREKANGSTVHIGIHPSKVAITKLKLDKDRRALVERKAAGRSRVTGILKGKHTDETVN</sequence>
<gene>
    <name type="primary">rpl-26</name>
    <name type="ORF">F28C6.7</name>
</gene>
<name>RL26_CAEEL</name>
<accession>Q19869</accession>
<accession>Q8I121</accession>
<accession>Q9U3H7</accession>
<dbReference type="EMBL" id="Z68315">
    <property type="protein sequence ID" value="CAA92674.1"/>
    <property type="molecule type" value="Genomic_DNA"/>
</dbReference>
<dbReference type="EMBL" id="Z68315">
    <property type="protein sequence ID" value="CAA92678.1"/>
    <property type="molecule type" value="Genomic_DNA"/>
</dbReference>
<dbReference type="PIR" id="T21486">
    <property type="entry name" value="T21486"/>
</dbReference>
<dbReference type="PIR" id="T21490">
    <property type="entry name" value="T21490"/>
</dbReference>
<dbReference type="RefSeq" id="NP_001366756.1">
    <molecule id="Q19869-2"/>
    <property type="nucleotide sequence ID" value="NM_001381531.3"/>
</dbReference>
<dbReference type="RefSeq" id="NP_495823.1">
    <molecule id="Q19869-1"/>
    <property type="nucleotide sequence ID" value="NM_063422.8"/>
</dbReference>
<dbReference type="RefSeq" id="NP_495824.1">
    <property type="nucleotide sequence ID" value="NM_063423.6"/>
</dbReference>
<dbReference type="PDB" id="9BH5">
    <property type="method" value="EM"/>
    <property type="resolution" value="2.63 A"/>
    <property type="chains" value="CY=1-142"/>
</dbReference>
<dbReference type="PDB" id="9CAI">
    <property type="method" value="EM"/>
    <property type="resolution" value="2.59 A"/>
    <property type="chains" value="CY=1-142"/>
</dbReference>
<dbReference type="PDBsum" id="9BH5"/>
<dbReference type="PDBsum" id="9CAI"/>
<dbReference type="EMDB" id="EMD-44533"/>
<dbReference type="EMDB" id="EMD-45392"/>
<dbReference type="SMR" id="Q19869"/>
<dbReference type="BioGRID" id="39707">
    <property type="interactions" value="90"/>
</dbReference>
<dbReference type="FunCoup" id="Q19869">
    <property type="interactions" value="2071"/>
</dbReference>
<dbReference type="STRING" id="6239.F28C6.7a.1"/>
<dbReference type="iPTMnet" id="Q19869"/>
<dbReference type="PaxDb" id="6239-F28C6.7a.3"/>
<dbReference type="PeptideAtlas" id="Q19869"/>
<dbReference type="EnsemblMetazoa" id="F28C6.7a.1">
    <molecule id="Q19869-1"/>
    <property type="protein sequence ID" value="F28C6.7a.1"/>
    <property type="gene ID" value="WBGene00004440"/>
</dbReference>
<dbReference type="EnsemblMetazoa" id="F28C6.7b.1">
    <molecule id="Q19869-2"/>
    <property type="protein sequence ID" value="F28C6.7b.1"/>
    <property type="gene ID" value="WBGene00004440"/>
</dbReference>
<dbReference type="EnsemblMetazoa" id="F28C6.7b.2">
    <molecule id="Q19869-2"/>
    <property type="protein sequence ID" value="F28C6.7b.2"/>
    <property type="gene ID" value="WBGene00004440"/>
</dbReference>
<dbReference type="EnsemblMetazoa" id="F28C6.7c.1">
    <property type="protein sequence ID" value="F28C6.7c.1"/>
    <property type="gene ID" value="WBGene00004440"/>
</dbReference>
<dbReference type="GeneID" id="174379"/>
<dbReference type="KEGG" id="cel:CELE_F28C6.7"/>
<dbReference type="UCSC" id="F28C6.7a.1">
    <molecule id="Q19869-1"/>
    <property type="organism name" value="c. elegans"/>
</dbReference>
<dbReference type="AGR" id="WB:WBGene00004440"/>
<dbReference type="CTD" id="174379"/>
<dbReference type="WormBase" id="F28C6.7a">
    <molecule id="Q19869-1"/>
    <property type="protein sequence ID" value="CE03278"/>
    <property type="gene ID" value="WBGene00004440"/>
    <property type="gene designation" value="rpl-26"/>
</dbReference>
<dbReference type="WormBase" id="F28C6.7b">
    <molecule id="Q19869-2"/>
    <property type="protein sequence ID" value="CE20731"/>
    <property type="gene ID" value="WBGene00004440"/>
    <property type="gene designation" value="rpl-26"/>
</dbReference>
<dbReference type="eggNOG" id="KOG3401">
    <property type="taxonomic scope" value="Eukaryota"/>
</dbReference>
<dbReference type="GeneTree" id="ENSGT00390000014165"/>
<dbReference type="HOGENOM" id="CLU_093240_0_0_1"/>
<dbReference type="InParanoid" id="Q19869"/>
<dbReference type="OMA" id="VRIMRGD"/>
<dbReference type="OrthoDB" id="1688503at2759"/>
<dbReference type="PhylomeDB" id="Q19869"/>
<dbReference type="Reactome" id="R-CEL-156827">
    <property type="pathway name" value="L13a-mediated translational silencing of Ceruloplasmin expression"/>
</dbReference>
<dbReference type="Reactome" id="R-CEL-1799339">
    <property type="pathway name" value="SRP-dependent cotranslational protein targeting to membrane"/>
</dbReference>
<dbReference type="Reactome" id="R-CEL-72689">
    <property type="pathway name" value="Formation of a pool of free 40S subunits"/>
</dbReference>
<dbReference type="Reactome" id="R-CEL-72706">
    <property type="pathway name" value="GTP hydrolysis and joining of the 60S ribosomal subunit"/>
</dbReference>
<dbReference type="Reactome" id="R-CEL-975956">
    <property type="pathway name" value="Nonsense Mediated Decay (NMD) independent of the Exon Junction Complex (EJC)"/>
</dbReference>
<dbReference type="Reactome" id="R-CEL-975957">
    <property type="pathway name" value="Nonsense Mediated Decay (NMD) enhanced by the Exon Junction Complex (EJC)"/>
</dbReference>
<dbReference type="PRO" id="PR:Q19869"/>
<dbReference type="Proteomes" id="UP000001940">
    <property type="component" value="Chromosome II"/>
</dbReference>
<dbReference type="Bgee" id="WBGene00004440">
    <property type="expression patterns" value="Expressed in larva and 4 other cell types or tissues"/>
</dbReference>
<dbReference type="GO" id="GO:0022625">
    <property type="term" value="C:cytosolic large ribosomal subunit"/>
    <property type="evidence" value="ECO:0000318"/>
    <property type="project" value="GO_Central"/>
</dbReference>
<dbReference type="GO" id="GO:0003723">
    <property type="term" value="F:RNA binding"/>
    <property type="evidence" value="ECO:0000318"/>
    <property type="project" value="GO_Central"/>
</dbReference>
<dbReference type="GO" id="GO:0003735">
    <property type="term" value="F:structural constituent of ribosome"/>
    <property type="evidence" value="ECO:0000318"/>
    <property type="project" value="GO_Central"/>
</dbReference>
<dbReference type="GO" id="GO:0002181">
    <property type="term" value="P:cytoplasmic translation"/>
    <property type="evidence" value="ECO:0000318"/>
    <property type="project" value="GO_Central"/>
</dbReference>
<dbReference type="GO" id="GO:0042273">
    <property type="term" value="P:ribosomal large subunit biogenesis"/>
    <property type="evidence" value="ECO:0000318"/>
    <property type="project" value="GO_Central"/>
</dbReference>
<dbReference type="CDD" id="cd06089">
    <property type="entry name" value="KOW_RPL26"/>
    <property type="match status" value="1"/>
</dbReference>
<dbReference type="FunFam" id="2.30.30.30:FF:000009">
    <property type="entry name" value="60S ribosomal protein L26"/>
    <property type="match status" value="1"/>
</dbReference>
<dbReference type="Gene3D" id="2.30.30.30">
    <property type="match status" value="1"/>
</dbReference>
<dbReference type="HAMAP" id="MF_01326_A">
    <property type="entry name" value="Ribosomal_uL24_A"/>
    <property type="match status" value="1"/>
</dbReference>
<dbReference type="InterPro" id="IPR005824">
    <property type="entry name" value="KOW"/>
</dbReference>
<dbReference type="InterPro" id="IPR014722">
    <property type="entry name" value="Rib_uL2_dom2"/>
</dbReference>
<dbReference type="InterPro" id="IPR005825">
    <property type="entry name" value="Ribosomal_uL24_CS"/>
</dbReference>
<dbReference type="InterPro" id="IPR005756">
    <property type="entry name" value="Ribosomal_uL24_euk/arc"/>
</dbReference>
<dbReference type="InterPro" id="IPR041988">
    <property type="entry name" value="Ribosomal_uL24_KOW"/>
</dbReference>
<dbReference type="InterPro" id="IPR008991">
    <property type="entry name" value="Translation_prot_SH3-like_sf"/>
</dbReference>
<dbReference type="NCBIfam" id="TIGR01080">
    <property type="entry name" value="rplX_A_E"/>
    <property type="match status" value="1"/>
</dbReference>
<dbReference type="PANTHER" id="PTHR11143">
    <property type="entry name" value="60S RIBOSOMAL PROTEIN L26 FAMILY MEMBER"/>
    <property type="match status" value="1"/>
</dbReference>
<dbReference type="Pfam" id="PF00467">
    <property type="entry name" value="KOW"/>
    <property type="match status" value="1"/>
</dbReference>
<dbReference type="Pfam" id="PF16906">
    <property type="entry name" value="Ribosomal_L26"/>
    <property type="match status" value="1"/>
</dbReference>
<dbReference type="SMART" id="SM00739">
    <property type="entry name" value="KOW"/>
    <property type="match status" value="1"/>
</dbReference>
<dbReference type="SUPFAM" id="SSF50104">
    <property type="entry name" value="Translation proteins SH3-like domain"/>
    <property type="match status" value="1"/>
</dbReference>
<dbReference type="PROSITE" id="PS01108">
    <property type="entry name" value="RIBOSOMAL_L24"/>
    <property type="match status" value="1"/>
</dbReference>
<keyword id="KW-0002">3D-structure</keyword>
<keyword id="KW-0025">Alternative splicing</keyword>
<keyword id="KW-1185">Reference proteome</keyword>
<keyword id="KW-0687">Ribonucleoprotein</keyword>
<keyword id="KW-0689">Ribosomal protein</keyword>